<gene>
    <name evidence="1" type="primary">proB</name>
    <name type="ordered locus">SFV_0286</name>
</gene>
<name>PROB_SHIF8</name>
<sequence>MSDSQTLVVKLGTSVLTGGSRRLNRAHIVELVRQCAQLHAAGHRIVIVTSGAIAAGREHLGYPELPATIASKQLLAAVGQSRLIQLWEQLFSIYGIHVGQMLLTRADMEDRERFLNARDTLRALLDNNIVPVINENDAVATAEIKVGDNDNLSALAAILAGADKLLLLTDQKGLYTADPRSNPQAELIKDVYGIDDALRAIAGDSVSGLGTGGMSTKLQAADVACRAGIDTIIAAGSKPGVIGDVMEGISVGTLFHAQATPLENRKRWIFGAPPAGEITVDEGATAAILERGSSLLPKGIKSVTGNFSRGEVIRICNLEGRDIAHGVSRYNSDALRRIAGHHSQEIDAILGYEYGPVAVHRDDMITR</sequence>
<organism>
    <name type="scientific">Shigella flexneri serotype 5b (strain 8401)</name>
    <dbReference type="NCBI Taxonomy" id="373384"/>
    <lineage>
        <taxon>Bacteria</taxon>
        <taxon>Pseudomonadati</taxon>
        <taxon>Pseudomonadota</taxon>
        <taxon>Gammaproteobacteria</taxon>
        <taxon>Enterobacterales</taxon>
        <taxon>Enterobacteriaceae</taxon>
        <taxon>Shigella</taxon>
    </lineage>
</organism>
<feature type="chain" id="PRO_1000081109" description="Glutamate 5-kinase">
    <location>
        <begin position="1"/>
        <end position="367"/>
    </location>
</feature>
<feature type="domain" description="PUA" evidence="1">
    <location>
        <begin position="275"/>
        <end position="353"/>
    </location>
</feature>
<feature type="binding site" evidence="1">
    <location>
        <position position="10"/>
    </location>
    <ligand>
        <name>ATP</name>
        <dbReference type="ChEBI" id="CHEBI:30616"/>
    </ligand>
</feature>
<feature type="binding site" evidence="1">
    <location>
        <position position="50"/>
    </location>
    <ligand>
        <name>substrate</name>
    </ligand>
</feature>
<feature type="binding site" evidence="1">
    <location>
        <position position="137"/>
    </location>
    <ligand>
        <name>substrate</name>
    </ligand>
</feature>
<feature type="binding site" evidence="1">
    <location>
        <position position="149"/>
    </location>
    <ligand>
        <name>substrate</name>
    </ligand>
</feature>
<feature type="binding site" evidence="1">
    <location>
        <begin position="169"/>
        <end position="170"/>
    </location>
    <ligand>
        <name>ATP</name>
        <dbReference type="ChEBI" id="CHEBI:30616"/>
    </ligand>
</feature>
<feature type="binding site" evidence="1">
    <location>
        <begin position="211"/>
        <end position="217"/>
    </location>
    <ligand>
        <name>ATP</name>
        <dbReference type="ChEBI" id="CHEBI:30616"/>
    </ligand>
</feature>
<accession>Q0T7R5</accession>
<evidence type="ECO:0000255" key="1">
    <source>
        <dbReference type="HAMAP-Rule" id="MF_00456"/>
    </source>
</evidence>
<reference key="1">
    <citation type="journal article" date="2006" name="BMC Genomics">
        <title>Complete genome sequence of Shigella flexneri 5b and comparison with Shigella flexneri 2a.</title>
        <authorList>
            <person name="Nie H."/>
            <person name="Yang F."/>
            <person name="Zhang X."/>
            <person name="Yang J."/>
            <person name="Chen L."/>
            <person name="Wang J."/>
            <person name="Xiong Z."/>
            <person name="Peng J."/>
            <person name="Sun L."/>
            <person name="Dong J."/>
            <person name="Xue Y."/>
            <person name="Xu X."/>
            <person name="Chen S."/>
            <person name="Yao Z."/>
            <person name="Shen Y."/>
            <person name="Jin Q."/>
        </authorList>
    </citation>
    <scope>NUCLEOTIDE SEQUENCE [LARGE SCALE GENOMIC DNA]</scope>
    <source>
        <strain>8401</strain>
    </source>
</reference>
<protein>
    <recommendedName>
        <fullName evidence="1">Glutamate 5-kinase</fullName>
        <ecNumber evidence="1">2.7.2.11</ecNumber>
    </recommendedName>
    <alternativeName>
        <fullName evidence="1">Gamma-glutamyl kinase</fullName>
        <shortName evidence="1">GK</shortName>
    </alternativeName>
</protein>
<dbReference type="EC" id="2.7.2.11" evidence="1"/>
<dbReference type="EMBL" id="CP000266">
    <property type="protein sequence ID" value="ABF02561.1"/>
    <property type="molecule type" value="Genomic_DNA"/>
</dbReference>
<dbReference type="RefSeq" id="WP_001285288.1">
    <property type="nucleotide sequence ID" value="NC_008258.1"/>
</dbReference>
<dbReference type="SMR" id="Q0T7R5"/>
<dbReference type="GeneID" id="93777151"/>
<dbReference type="KEGG" id="sfv:SFV_0286"/>
<dbReference type="HOGENOM" id="CLU_025400_2_0_6"/>
<dbReference type="UniPathway" id="UPA00098">
    <property type="reaction ID" value="UER00359"/>
</dbReference>
<dbReference type="Proteomes" id="UP000000659">
    <property type="component" value="Chromosome"/>
</dbReference>
<dbReference type="GO" id="GO:0005829">
    <property type="term" value="C:cytosol"/>
    <property type="evidence" value="ECO:0007669"/>
    <property type="project" value="TreeGrafter"/>
</dbReference>
<dbReference type="GO" id="GO:0005524">
    <property type="term" value="F:ATP binding"/>
    <property type="evidence" value="ECO:0007669"/>
    <property type="project" value="UniProtKB-KW"/>
</dbReference>
<dbReference type="GO" id="GO:0004349">
    <property type="term" value="F:glutamate 5-kinase activity"/>
    <property type="evidence" value="ECO:0007669"/>
    <property type="project" value="UniProtKB-UniRule"/>
</dbReference>
<dbReference type="GO" id="GO:0003723">
    <property type="term" value="F:RNA binding"/>
    <property type="evidence" value="ECO:0007669"/>
    <property type="project" value="InterPro"/>
</dbReference>
<dbReference type="GO" id="GO:0055129">
    <property type="term" value="P:L-proline biosynthetic process"/>
    <property type="evidence" value="ECO:0007669"/>
    <property type="project" value="UniProtKB-UniRule"/>
</dbReference>
<dbReference type="CDD" id="cd04242">
    <property type="entry name" value="AAK_G5K_ProB"/>
    <property type="match status" value="1"/>
</dbReference>
<dbReference type="CDD" id="cd21157">
    <property type="entry name" value="PUA_G5K"/>
    <property type="match status" value="1"/>
</dbReference>
<dbReference type="FunFam" id="2.30.130.10:FF:000003">
    <property type="entry name" value="Glutamate 5-kinase"/>
    <property type="match status" value="1"/>
</dbReference>
<dbReference type="FunFam" id="3.40.1160.10:FF:000006">
    <property type="entry name" value="Glutamate 5-kinase"/>
    <property type="match status" value="1"/>
</dbReference>
<dbReference type="Gene3D" id="3.40.1160.10">
    <property type="entry name" value="Acetylglutamate kinase-like"/>
    <property type="match status" value="2"/>
</dbReference>
<dbReference type="Gene3D" id="2.30.130.10">
    <property type="entry name" value="PUA domain"/>
    <property type="match status" value="1"/>
</dbReference>
<dbReference type="HAMAP" id="MF_00456">
    <property type="entry name" value="ProB"/>
    <property type="match status" value="1"/>
</dbReference>
<dbReference type="InterPro" id="IPR036393">
    <property type="entry name" value="AceGlu_kinase-like_sf"/>
</dbReference>
<dbReference type="InterPro" id="IPR001048">
    <property type="entry name" value="Asp/Glu/Uridylate_kinase"/>
</dbReference>
<dbReference type="InterPro" id="IPR041739">
    <property type="entry name" value="G5K_ProB"/>
</dbReference>
<dbReference type="InterPro" id="IPR001057">
    <property type="entry name" value="Glu/AcGlu_kinase"/>
</dbReference>
<dbReference type="InterPro" id="IPR011529">
    <property type="entry name" value="Glu_5kinase"/>
</dbReference>
<dbReference type="InterPro" id="IPR005715">
    <property type="entry name" value="Glu_5kinase/COase_Synthase"/>
</dbReference>
<dbReference type="InterPro" id="IPR019797">
    <property type="entry name" value="Glutamate_5-kinase_CS"/>
</dbReference>
<dbReference type="InterPro" id="IPR002478">
    <property type="entry name" value="PUA"/>
</dbReference>
<dbReference type="InterPro" id="IPR015947">
    <property type="entry name" value="PUA-like_sf"/>
</dbReference>
<dbReference type="InterPro" id="IPR036974">
    <property type="entry name" value="PUA_sf"/>
</dbReference>
<dbReference type="NCBIfam" id="TIGR01027">
    <property type="entry name" value="proB"/>
    <property type="match status" value="1"/>
</dbReference>
<dbReference type="PANTHER" id="PTHR43654">
    <property type="entry name" value="GLUTAMATE 5-KINASE"/>
    <property type="match status" value="1"/>
</dbReference>
<dbReference type="PANTHER" id="PTHR43654:SF1">
    <property type="entry name" value="ISOPENTENYL PHOSPHATE KINASE"/>
    <property type="match status" value="1"/>
</dbReference>
<dbReference type="Pfam" id="PF00696">
    <property type="entry name" value="AA_kinase"/>
    <property type="match status" value="1"/>
</dbReference>
<dbReference type="Pfam" id="PF01472">
    <property type="entry name" value="PUA"/>
    <property type="match status" value="1"/>
</dbReference>
<dbReference type="PIRSF" id="PIRSF000729">
    <property type="entry name" value="GK"/>
    <property type="match status" value="1"/>
</dbReference>
<dbReference type="PRINTS" id="PR00474">
    <property type="entry name" value="GLU5KINASE"/>
</dbReference>
<dbReference type="SMART" id="SM00359">
    <property type="entry name" value="PUA"/>
    <property type="match status" value="1"/>
</dbReference>
<dbReference type="SUPFAM" id="SSF53633">
    <property type="entry name" value="Carbamate kinase-like"/>
    <property type="match status" value="1"/>
</dbReference>
<dbReference type="SUPFAM" id="SSF88697">
    <property type="entry name" value="PUA domain-like"/>
    <property type="match status" value="1"/>
</dbReference>
<dbReference type="PROSITE" id="PS00902">
    <property type="entry name" value="GLUTAMATE_5_KINASE"/>
    <property type="match status" value="1"/>
</dbReference>
<dbReference type="PROSITE" id="PS50890">
    <property type="entry name" value="PUA"/>
    <property type="match status" value="1"/>
</dbReference>
<comment type="function">
    <text evidence="1">Catalyzes the transfer of a phosphate group to glutamate to form L-glutamate 5-phosphate.</text>
</comment>
<comment type="catalytic activity">
    <reaction evidence="1">
        <text>L-glutamate + ATP = L-glutamyl 5-phosphate + ADP</text>
        <dbReference type="Rhea" id="RHEA:14877"/>
        <dbReference type="ChEBI" id="CHEBI:29985"/>
        <dbReference type="ChEBI" id="CHEBI:30616"/>
        <dbReference type="ChEBI" id="CHEBI:58274"/>
        <dbReference type="ChEBI" id="CHEBI:456216"/>
        <dbReference type="EC" id="2.7.2.11"/>
    </reaction>
</comment>
<comment type="pathway">
    <text evidence="1">Amino-acid biosynthesis; L-proline biosynthesis; L-glutamate 5-semialdehyde from L-glutamate: step 1/2.</text>
</comment>
<comment type="subcellular location">
    <subcellularLocation>
        <location evidence="1">Cytoplasm</location>
    </subcellularLocation>
</comment>
<comment type="similarity">
    <text evidence="1">Belongs to the glutamate 5-kinase family.</text>
</comment>
<keyword id="KW-0028">Amino-acid biosynthesis</keyword>
<keyword id="KW-0067">ATP-binding</keyword>
<keyword id="KW-0963">Cytoplasm</keyword>
<keyword id="KW-0418">Kinase</keyword>
<keyword id="KW-0547">Nucleotide-binding</keyword>
<keyword id="KW-0641">Proline biosynthesis</keyword>
<keyword id="KW-0808">Transferase</keyword>
<proteinExistence type="inferred from homology"/>